<gene>
    <name type="primary">xdhA</name>
    <name type="ORF">An12g00030</name>
</gene>
<accession>A2QY54</accession>
<comment type="function">
    <text evidence="1">Xylitol dehydrogenase which catalyzes the conversion of xylitol to D-xylulose. Xylose is a major component of hemicelluloses such as xylan. Most fungi utilize D-xylose via three enzymatic reactions, xylose reductase (XR), xylitol dehydrogenase (XDH), and xylulokinase, to form xylulose 5-phosphate, which enters pentose phosphate pathway (By similarity).</text>
</comment>
<comment type="catalytic activity">
    <reaction>
        <text>xylitol + NAD(+) = D-xylulose + NADH + H(+)</text>
        <dbReference type="Rhea" id="RHEA:20433"/>
        <dbReference type="ChEBI" id="CHEBI:15378"/>
        <dbReference type="ChEBI" id="CHEBI:17140"/>
        <dbReference type="ChEBI" id="CHEBI:17151"/>
        <dbReference type="ChEBI" id="CHEBI:57540"/>
        <dbReference type="ChEBI" id="CHEBI:57945"/>
        <dbReference type="EC" id="1.1.1.9"/>
    </reaction>
</comment>
<comment type="cofactor">
    <cofactor evidence="1">
        <name>Zn(2+)</name>
        <dbReference type="ChEBI" id="CHEBI:29105"/>
    </cofactor>
    <text evidence="1">Binds 1 zinc ion per subunit.</text>
</comment>
<comment type="pathway">
    <text>Carbohydrate degradation; L-arabinose degradation via L-arabinitol; D-xylulose 5-phosphate from L-arabinose (fungal route): step 4/5.</text>
</comment>
<comment type="similarity">
    <text evidence="3">Belongs to the zinc-containing alcohol dehydrogenase family.</text>
</comment>
<keyword id="KW-0119">Carbohydrate metabolism</keyword>
<keyword id="KW-0479">Metal-binding</keyword>
<keyword id="KW-0520">NAD</keyword>
<keyword id="KW-0560">Oxidoreductase</keyword>
<keyword id="KW-1185">Reference proteome</keyword>
<keyword id="KW-0859">Xylose metabolism</keyword>
<keyword id="KW-0862">Zinc</keyword>
<sequence>MSTQNTNAQNLSFVLEGIHRVKFEDRPIPEINNPHDVLVNVRFTGICGSDVHYWEHGSIGQFIVKDPMVLGHESSGVVSKVGSAVTSLKVGDCVAMEPGIPCRRCEPCKAGKYNLCVKMAFAATPPYDGTLAKYYVLPEDFCYKLPESITLQEGAIMEPLSVAVHIVKQAGINPGQSVVVFGAGPVGLLCCAVAKAYGASKVIAVDIQKGRLDFAKKYAATATFEPAKAAALENAQRIITENDLGSGADVAIDASGAEPSVHTGIHVLRAGGTYVQGGMGRSEITFPIMAACTKELNVKGSFRYGSGDYKLAVSLVSAGKVNVKELITGVVKFEDAERAFEEVRAGKGIKTLIAGVDS</sequence>
<proteinExistence type="inferred from homology"/>
<organism>
    <name type="scientific">Aspergillus niger (strain ATCC MYA-4892 / CBS 513.88 / FGSC A1513)</name>
    <dbReference type="NCBI Taxonomy" id="425011"/>
    <lineage>
        <taxon>Eukaryota</taxon>
        <taxon>Fungi</taxon>
        <taxon>Dikarya</taxon>
        <taxon>Ascomycota</taxon>
        <taxon>Pezizomycotina</taxon>
        <taxon>Eurotiomycetes</taxon>
        <taxon>Eurotiomycetidae</taxon>
        <taxon>Eurotiales</taxon>
        <taxon>Aspergillaceae</taxon>
        <taxon>Aspergillus</taxon>
        <taxon>Aspergillus subgen. Circumdati</taxon>
    </lineage>
</organism>
<reference key="1">
    <citation type="journal article" date="2007" name="Nat. Biotechnol.">
        <title>Genome sequencing and analysis of the versatile cell factory Aspergillus niger CBS 513.88.</title>
        <authorList>
            <person name="Pel H.J."/>
            <person name="de Winde J.H."/>
            <person name="Archer D.B."/>
            <person name="Dyer P.S."/>
            <person name="Hofmann G."/>
            <person name="Schaap P.J."/>
            <person name="Turner G."/>
            <person name="de Vries R.P."/>
            <person name="Albang R."/>
            <person name="Albermann K."/>
            <person name="Andersen M.R."/>
            <person name="Bendtsen J.D."/>
            <person name="Benen J.A.E."/>
            <person name="van den Berg M."/>
            <person name="Breestraat S."/>
            <person name="Caddick M.X."/>
            <person name="Contreras R."/>
            <person name="Cornell M."/>
            <person name="Coutinho P.M."/>
            <person name="Danchin E.G.J."/>
            <person name="Debets A.J.M."/>
            <person name="Dekker P."/>
            <person name="van Dijck P.W.M."/>
            <person name="van Dijk A."/>
            <person name="Dijkhuizen L."/>
            <person name="Driessen A.J.M."/>
            <person name="d'Enfert C."/>
            <person name="Geysens S."/>
            <person name="Goosen C."/>
            <person name="Groot G.S.P."/>
            <person name="de Groot P.W.J."/>
            <person name="Guillemette T."/>
            <person name="Henrissat B."/>
            <person name="Herweijer M."/>
            <person name="van den Hombergh J.P.T.W."/>
            <person name="van den Hondel C.A.M.J.J."/>
            <person name="van der Heijden R.T.J.M."/>
            <person name="van der Kaaij R.M."/>
            <person name="Klis F.M."/>
            <person name="Kools H.J."/>
            <person name="Kubicek C.P."/>
            <person name="van Kuyk P.A."/>
            <person name="Lauber J."/>
            <person name="Lu X."/>
            <person name="van der Maarel M.J.E.C."/>
            <person name="Meulenberg R."/>
            <person name="Menke H."/>
            <person name="Mortimer M.A."/>
            <person name="Nielsen J."/>
            <person name="Oliver S.G."/>
            <person name="Olsthoorn M."/>
            <person name="Pal K."/>
            <person name="van Peij N.N.M.E."/>
            <person name="Ram A.F.J."/>
            <person name="Rinas U."/>
            <person name="Roubos J.A."/>
            <person name="Sagt C.M.J."/>
            <person name="Schmoll M."/>
            <person name="Sun J."/>
            <person name="Ussery D."/>
            <person name="Varga J."/>
            <person name="Vervecken W."/>
            <person name="van de Vondervoort P.J.J."/>
            <person name="Wedler H."/>
            <person name="Woesten H.A.B."/>
            <person name="Zeng A.-P."/>
            <person name="van Ooyen A.J.J."/>
            <person name="Visser J."/>
            <person name="Stam H."/>
        </authorList>
    </citation>
    <scope>NUCLEOTIDE SEQUENCE [LARGE SCALE GENOMIC DNA]</scope>
    <source>
        <strain>ATCC MYA-4892 / CBS 513.88 / FGSC A1513</strain>
    </source>
</reference>
<dbReference type="EC" id="1.1.1.9"/>
<dbReference type="EMBL" id="AM270258">
    <property type="protein sequence ID" value="CAK40934.1"/>
    <property type="molecule type" value="Genomic_DNA"/>
</dbReference>
<dbReference type="RefSeq" id="XP_001395093.1">
    <property type="nucleotide sequence ID" value="XM_001395056.2"/>
</dbReference>
<dbReference type="SMR" id="A2QY54"/>
<dbReference type="EnsemblFungi" id="CAK40934">
    <property type="protein sequence ID" value="CAK40934"/>
    <property type="gene ID" value="An12g00030"/>
</dbReference>
<dbReference type="GeneID" id="4985352"/>
<dbReference type="KEGG" id="ang:An12g00030"/>
<dbReference type="VEuPathDB" id="FungiDB:An12g00030"/>
<dbReference type="HOGENOM" id="CLU_026673_11_5_1"/>
<dbReference type="UniPathway" id="UPA00146">
    <property type="reaction ID" value="UER00577"/>
</dbReference>
<dbReference type="Proteomes" id="UP000006706">
    <property type="component" value="Chromosome 3L"/>
</dbReference>
<dbReference type="GO" id="GO:0046526">
    <property type="term" value="F:D-xylulose reductase activity"/>
    <property type="evidence" value="ECO:0007669"/>
    <property type="project" value="UniProtKB-EC"/>
</dbReference>
<dbReference type="GO" id="GO:0003939">
    <property type="term" value="F:L-iditol 2-dehydrogenase (NAD+) activity"/>
    <property type="evidence" value="ECO:0007669"/>
    <property type="project" value="TreeGrafter"/>
</dbReference>
<dbReference type="GO" id="GO:0008270">
    <property type="term" value="F:zinc ion binding"/>
    <property type="evidence" value="ECO:0007669"/>
    <property type="project" value="InterPro"/>
</dbReference>
<dbReference type="GO" id="GO:0042732">
    <property type="term" value="P:D-xylose metabolic process"/>
    <property type="evidence" value="ECO:0007669"/>
    <property type="project" value="UniProtKB-KW"/>
</dbReference>
<dbReference type="GO" id="GO:0019569">
    <property type="term" value="P:L-arabinose catabolic process to xylulose 5-phosphate"/>
    <property type="evidence" value="ECO:0007669"/>
    <property type="project" value="UniProtKB-UniPathway"/>
</dbReference>
<dbReference type="GO" id="GO:0006062">
    <property type="term" value="P:sorbitol catabolic process"/>
    <property type="evidence" value="ECO:0007669"/>
    <property type="project" value="TreeGrafter"/>
</dbReference>
<dbReference type="CDD" id="cd05285">
    <property type="entry name" value="sorbitol_DH"/>
    <property type="match status" value="1"/>
</dbReference>
<dbReference type="FunFam" id="3.40.50.720:FF:000068">
    <property type="entry name" value="Sorbitol dehydrogenase"/>
    <property type="match status" value="1"/>
</dbReference>
<dbReference type="Gene3D" id="3.90.180.10">
    <property type="entry name" value="Medium-chain alcohol dehydrogenases, catalytic domain"/>
    <property type="match status" value="1"/>
</dbReference>
<dbReference type="Gene3D" id="3.40.50.720">
    <property type="entry name" value="NAD(P)-binding Rossmann-like Domain"/>
    <property type="match status" value="1"/>
</dbReference>
<dbReference type="InterPro" id="IPR013149">
    <property type="entry name" value="ADH-like_C"/>
</dbReference>
<dbReference type="InterPro" id="IPR013154">
    <property type="entry name" value="ADH-like_N"/>
</dbReference>
<dbReference type="InterPro" id="IPR002328">
    <property type="entry name" value="ADH_Zn_CS"/>
</dbReference>
<dbReference type="InterPro" id="IPR011032">
    <property type="entry name" value="GroES-like_sf"/>
</dbReference>
<dbReference type="InterPro" id="IPR036291">
    <property type="entry name" value="NAD(P)-bd_dom_sf"/>
</dbReference>
<dbReference type="InterPro" id="IPR020843">
    <property type="entry name" value="PKS_ER"/>
</dbReference>
<dbReference type="InterPro" id="IPR045306">
    <property type="entry name" value="SDH-like"/>
</dbReference>
<dbReference type="PANTHER" id="PTHR43161">
    <property type="entry name" value="SORBITOL DEHYDROGENASE"/>
    <property type="match status" value="1"/>
</dbReference>
<dbReference type="PANTHER" id="PTHR43161:SF9">
    <property type="entry name" value="SORBITOL DEHYDROGENASE"/>
    <property type="match status" value="1"/>
</dbReference>
<dbReference type="Pfam" id="PF08240">
    <property type="entry name" value="ADH_N"/>
    <property type="match status" value="1"/>
</dbReference>
<dbReference type="Pfam" id="PF00107">
    <property type="entry name" value="ADH_zinc_N"/>
    <property type="match status" value="1"/>
</dbReference>
<dbReference type="SMART" id="SM00829">
    <property type="entry name" value="PKS_ER"/>
    <property type="match status" value="1"/>
</dbReference>
<dbReference type="SUPFAM" id="SSF50129">
    <property type="entry name" value="GroES-like"/>
    <property type="match status" value="1"/>
</dbReference>
<dbReference type="SUPFAM" id="SSF51735">
    <property type="entry name" value="NAD(P)-binding Rossmann-fold domains"/>
    <property type="match status" value="1"/>
</dbReference>
<dbReference type="PROSITE" id="PS00059">
    <property type="entry name" value="ADH_ZINC"/>
    <property type="match status" value="1"/>
</dbReference>
<evidence type="ECO:0000250" key="1"/>
<evidence type="ECO:0000255" key="2"/>
<evidence type="ECO:0000305" key="3"/>
<protein>
    <recommendedName>
        <fullName>Probable D-xylulose reductase A</fullName>
        <ecNumber>1.1.1.9</ecNumber>
    </recommendedName>
    <alternativeName>
        <fullName>Xylitol dehydrogenase A</fullName>
    </alternativeName>
</protein>
<name>XYL2_ASPNC</name>
<feature type="chain" id="PRO_0000393509" description="Probable D-xylulose reductase A">
    <location>
        <begin position="1"/>
        <end position="358"/>
    </location>
</feature>
<feature type="binding site" evidence="1">
    <location>
        <position position="47"/>
    </location>
    <ligand>
        <name>Zn(2+)</name>
        <dbReference type="ChEBI" id="CHEBI:29105"/>
        <note>catalytic</note>
    </ligand>
</feature>
<feature type="binding site" evidence="1">
    <location>
        <position position="72"/>
    </location>
    <ligand>
        <name>Zn(2+)</name>
        <dbReference type="ChEBI" id="CHEBI:29105"/>
        <note>catalytic</note>
    </ligand>
</feature>
<feature type="binding site" evidence="1">
    <location>
        <position position="73"/>
    </location>
    <ligand>
        <name>Zn(2+)</name>
        <dbReference type="ChEBI" id="CHEBI:29105"/>
        <note>catalytic</note>
    </ligand>
</feature>
<feature type="binding site" evidence="2">
    <location>
        <begin position="182"/>
        <end position="187"/>
    </location>
    <ligand>
        <name>NAD(+)</name>
        <dbReference type="ChEBI" id="CHEBI:57540"/>
    </ligand>
</feature>